<keyword id="KW-0472">Membrane</keyword>
<keyword id="KW-1185">Reference proteome</keyword>
<keyword id="KW-0812">Transmembrane</keyword>
<keyword id="KW-1133">Transmembrane helix</keyword>
<comment type="subcellular location">
    <subcellularLocation>
        <location evidence="2">Membrane</location>
        <topology evidence="2">Single-pass membrane protein</topology>
    </subcellularLocation>
</comment>
<comment type="similarity">
    <text evidence="2">Belongs to the reprimo family.</text>
</comment>
<organism>
    <name type="scientific">Xenopus laevis</name>
    <name type="common">African clawed frog</name>
    <dbReference type="NCBI Taxonomy" id="8355"/>
    <lineage>
        <taxon>Eukaryota</taxon>
        <taxon>Metazoa</taxon>
        <taxon>Chordata</taxon>
        <taxon>Craniata</taxon>
        <taxon>Vertebrata</taxon>
        <taxon>Euteleostomi</taxon>
        <taxon>Amphibia</taxon>
        <taxon>Batrachia</taxon>
        <taxon>Anura</taxon>
        <taxon>Pipoidea</taxon>
        <taxon>Pipidae</taxon>
        <taxon>Xenopodinae</taxon>
        <taxon>Xenopus</taxon>
        <taxon>Xenopus</taxon>
    </lineage>
</organism>
<gene>
    <name type="primary">rprml</name>
</gene>
<accession>Q6GM22</accession>
<protein>
    <recommendedName>
        <fullName>Reprimo-like protein</fullName>
    </recommendedName>
</protein>
<reference key="1">
    <citation type="submission" date="2004-06" db="EMBL/GenBank/DDBJ databases">
        <authorList>
            <consortium name="NIH - Xenopus Gene Collection (XGC) project"/>
        </authorList>
    </citation>
    <scope>NUCLEOTIDE SEQUENCE [LARGE SCALE MRNA]</scope>
    <source>
        <tissue>Eye</tissue>
    </source>
</reference>
<evidence type="ECO:0000255" key="1"/>
<evidence type="ECO:0000305" key="2"/>
<proteinExistence type="inferred from homology"/>
<dbReference type="EMBL" id="BC074267">
    <property type="protein sequence ID" value="AAH74267.1"/>
    <property type="molecule type" value="mRNA"/>
</dbReference>
<dbReference type="RefSeq" id="NP_001086155.1">
    <property type="nucleotide sequence ID" value="NM_001092686.1"/>
</dbReference>
<dbReference type="DNASU" id="444584"/>
<dbReference type="GeneID" id="444584"/>
<dbReference type="KEGG" id="xla:444584"/>
<dbReference type="AGR" id="Xenbase:XB-GENE-996625"/>
<dbReference type="CTD" id="444584"/>
<dbReference type="Xenbase" id="XB-GENE-996625">
    <property type="gene designation" value="rprml.L"/>
</dbReference>
<dbReference type="OMA" id="STLIGCC"/>
<dbReference type="OrthoDB" id="9828700at2759"/>
<dbReference type="Proteomes" id="UP000186698">
    <property type="component" value="Chromosome 9_10L"/>
</dbReference>
<dbReference type="Bgee" id="444584">
    <property type="expression patterns" value="Expressed in brain and 2 other cell types or tissues"/>
</dbReference>
<dbReference type="GO" id="GO:0016020">
    <property type="term" value="C:membrane"/>
    <property type="evidence" value="ECO:0007669"/>
    <property type="project" value="UniProtKB-SubCell"/>
</dbReference>
<dbReference type="InterPro" id="IPR043383">
    <property type="entry name" value="Reprimo_fam"/>
</dbReference>
<dbReference type="PANTHER" id="PTHR28649">
    <property type="entry name" value="PROTEIN REPRIMO-RELATED"/>
    <property type="match status" value="1"/>
</dbReference>
<dbReference type="PANTHER" id="PTHR28649:SF3">
    <property type="entry name" value="REPRIMO-LIKE PROTEIN"/>
    <property type="match status" value="1"/>
</dbReference>
<sequence length="112" mass="12237">MNGTFFNHTLMEQVAYNNTTSQDLGSLMGCCNGSQTVITNDGGSLILIPDERSLFITRVVQIAVLCVLSLTVLFGIFFLGCNLLIKSESMINFLVKDRRPSKDVGAVILGLY</sequence>
<name>RPRML_XENLA</name>
<feature type="chain" id="PRO_0000312759" description="Reprimo-like protein">
    <location>
        <begin position="1"/>
        <end position="112"/>
    </location>
</feature>
<feature type="transmembrane region" description="Helical" evidence="1">
    <location>
        <begin position="59"/>
        <end position="79"/>
    </location>
</feature>